<keyword id="KW-0051">Antiviral defense</keyword>
<keyword id="KW-1185">Reference proteome</keyword>
<keyword id="KW-0694">RNA-binding</keyword>
<sequence length="375" mass="42340">MNTYLKPFELTLRCLGPVFIGSGEKRTSKEYHVEGDRVYFPDMELLYADIPAHKRKSFEAFVMNTDGAQATAPLKEWVEPNAVKLDPAKHRGYEVKIGSIEPRRASRGRGGRMTRKKLTLNEIHAFIKDPLGRPYVPGSTVKGMLRSIYLQSLVHKRTAQPVRVPGHQTREHRQYGERFERKELRKSGRPNTRPQDAVNDLFQAIRVTDSPALRTSDLLICQKMDMNVHGKPDGLPLFRECLAPGTSISHRVVVDTSPTARGGWREGERFLETLAETAASVNQARYAEYRAMYPGVNAIVGPIVYLGGGAGYRSKTFVTDQDDMAKVLDAQFGKVVKHVDKTRELRVSPLVLKRTKIDNICYEMGQCELSIRRAE</sequence>
<gene>
    <name type="primary">csm5</name>
    <name type="ordered locus">MT2886</name>
</gene>
<evidence type="ECO:0000250" key="1">
    <source>
        <dbReference type="UniProtKB" id="A0A0A7HF79"/>
    </source>
</evidence>
<evidence type="ECO:0000250" key="2">
    <source>
        <dbReference type="UniProtKB" id="P9WJF5"/>
    </source>
</evidence>
<evidence type="ECO:0000256" key="3">
    <source>
        <dbReference type="SAM" id="MobiDB-lite"/>
    </source>
</evidence>
<evidence type="ECO:0000305" key="4"/>
<organism>
    <name type="scientific">Mycobacterium tuberculosis (strain CDC 1551 / Oshkosh)</name>
    <dbReference type="NCBI Taxonomy" id="83331"/>
    <lineage>
        <taxon>Bacteria</taxon>
        <taxon>Bacillati</taxon>
        <taxon>Actinomycetota</taxon>
        <taxon>Actinomycetes</taxon>
        <taxon>Mycobacteriales</taxon>
        <taxon>Mycobacteriaceae</taxon>
        <taxon>Mycobacterium</taxon>
        <taxon>Mycobacterium tuberculosis complex</taxon>
    </lineage>
</organism>
<reference key="1">
    <citation type="journal article" date="2002" name="J. Bacteriol.">
        <title>Whole-genome comparison of Mycobacterium tuberculosis clinical and laboratory strains.</title>
        <authorList>
            <person name="Fleischmann R.D."/>
            <person name="Alland D."/>
            <person name="Eisen J.A."/>
            <person name="Carpenter L."/>
            <person name="White O."/>
            <person name="Peterson J.D."/>
            <person name="DeBoy R.T."/>
            <person name="Dodson R.J."/>
            <person name="Gwinn M.L."/>
            <person name="Haft D.H."/>
            <person name="Hickey E.K."/>
            <person name="Kolonay J.F."/>
            <person name="Nelson W.C."/>
            <person name="Umayam L.A."/>
            <person name="Ermolaeva M.D."/>
            <person name="Salzberg S.L."/>
            <person name="Delcher A."/>
            <person name="Utterback T.R."/>
            <person name="Weidman J.F."/>
            <person name="Khouri H.M."/>
            <person name="Gill J."/>
            <person name="Mikula A."/>
            <person name="Bishai W."/>
            <person name="Jacobs W.R. Jr."/>
            <person name="Venter J.C."/>
            <person name="Fraser C.M."/>
        </authorList>
    </citation>
    <scope>NUCLEOTIDE SEQUENCE [LARGE SCALE GENOMIC DNA]</scope>
    <source>
        <strain>CDC 1551 / Oshkosh</strain>
    </source>
</reference>
<feature type="chain" id="PRO_0000427839" description="CRISPR system Cms protein Csm5">
    <location>
        <begin position="1"/>
        <end position="375"/>
    </location>
</feature>
<feature type="region of interest" description="Disordered" evidence="3">
    <location>
        <begin position="167"/>
        <end position="195"/>
    </location>
</feature>
<feature type="compositionally biased region" description="Basic and acidic residues" evidence="3">
    <location>
        <begin position="168"/>
        <end position="186"/>
    </location>
</feature>
<proteinExistence type="inferred from homology"/>
<accession>P9WJF4</accession>
<accession>F2GLB5</accession>
<accession>L0TCC2</accession>
<accession>P71633</accession>
<accession>Q7D6I5</accession>
<protein>
    <recommendedName>
        <fullName>CRISPR system Cms protein Csm5</fullName>
    </recommendedName>
    <alternativeName>
        <fullName>CRISPR type III A-associated protein Csm5</fullName>
    </alternativeName>
</protein>
<dbReference type="EMBL" id="AE000516">
    <property type="protein sequence ID" value="AAK47211.1"/>
    <property type="molecule type" value="Genomic_DNA"/>
</dbReference>
<dbReference type="PIR" id="F70691">
    <property type="entry name" value="F70691"/>
</dbReference>
<dbReference type="RefSeq" id="WP_003414285.1">
    <property type="nucleotide sequence ID" value="NZ_KK341227.1"/>
</dbReference>
<dbReference type="SMR" id="P9WJF4"/>
<dbReference type="KEGG" id="mtc:MT2886"/>
<dbReference type="PATRIC" id="fig|83331.31.peg.3115"/>
<dbReference type="HOGENOM" id="CLU_036878_0_1_11"/>
<dbReference type="Proteomes" id="UP000001020">
    <property type="component" value="Chromosome"/>
</dbReference>
<dbReference type="GO" id="GO:0003723">
    <property type="term" value="F:RNA binding"/>
    <property type="evidence" value="ECO:0007669"/>
    <property type="project" value="UniProtKB-KW"/>
</dbReference>
<dbReference type="GO" id="GO:0051607">
    <property type="term" value="P:defense response to virus"/>
    <property type="evidence" value="ECO:0007669"/>
    <property type="project" value="UniProtKB-KW"/>
</dbReference>
<dbReference type="CDD" id="cd09662">
    <property type="entry name" value="Csm5_III-A"/>
    <property type="match status" value="1"/>
</dbReference>
<dbReference type="InterPro" id="IPR010173">
    <property type="entry name" value="CRISPR-assoc_Csm5"/>
</dbReference>
<dbReference type="InterPro" id="IPR005537">
    <property type="entry name" value="RAMP_III_fam"/>
</dbReference>
<dbReference type="NCBIfam" id="TIGR01899">
    <property type="entry name" value="cas_TM1807_csm5"/>
    <property type="match status" value="1"/>
</dbReference>
<dbReference type="PANTHER" id="PTHR38007">
    <property type="entry name" value="CRISPR SYSTEM CMS PROTEIN CSM5"/>
    <property type="match status" value="1"/>
</dbReference>
<dbReference type="PANTHER" id="PTHR38007:SF1">
    <property type="entry name" value="CRISPR SYSTEM CMS PROTEIN CSM5"/>
    <property type="match status" value="1"/>
</dbReference>
<dbReference type="Pfam" id="PF03787">
    <property type="entry name" value="RAMPs"/>
    <property type="match status" value="1"/>
</dbReference>
<name>CSM5_MYCTO</name>
<comment type="function">
    <text evidence="1">CRISPR (clustered regularly interspaced short palindromic repeat) is an adaptive immune system that provides protection against mobile genetic elements (viruses, transposable elements and conjugative plasmids). CRISPR clusters contain spacers, sequences complementary to antecedent mobile elements, and target invading nucleic acids. CRISPR clusters are transcribed and processed into CRISPR RNA (crRNA). The type III-A Csm effector complex binds crRNA and acts as a crRNA-guided RNase, DNase and cyclic oligoadenylate synthase; binding of target RNA cognate to the crRNA is required for all activities.</text>
</comment>
<comment type="function">
    <text evidence="1">This subunit might be involved in maturation of a crRNA intermediate to its mature form.</text>
</comment>
<comment type="subunit">
    <text evidence="2">Part of the Csm effector complex that includes Cas10, Csm2, Csm3, Csm4 and Csm5.</text>
</comment>
<comment type="miscellaneous">
    <text evidence="4">Encoded in a type III-A CRISPR locus.</text>
</comment>
<comment type="similarity">
    <text evidence="4">Belongs to the CRISPR-associated Csm5 family.</text>
</comment>